<accession>P0C006</accession>
<organism>
    <name type="scientific">Morone chrysops x Morone saxatilis</name>
    <name type="common">White bass x Striped bass</name>
    <dbReference type="NCBI Taxonomy" id="45352"/>
    <lineage>
        <taxon>Eukaryota</taxon>
        <taxon>Metazoa</taxon>
        <taxon>Chordata</taxon>
        <taxon>Craniata</taxon>
        <taxon>Vertebrata</taxon>
        <taxon>Euteleostomi</taxon>
        <taxon>Actinopterygii</taxon>
        <taxon>Neopterygii</taxon>
        <taxon>Teleostei</taxon>
        <taxon>Neoteleostei</taxon>
        <taxon>Acanthomorphata</taxon>
        <taxon>Eupercaria</taxon>
        <taxon>Moronidae</taxon>
        <taxon>Morone</taxon>
    </lineage>
</organism>
<proteinExistence type="evidence at protein level"/>
<sequence>FIHHIFRGIVHAGRSIGRFLTG</sequence>
<dbReference type="PDB" id="2MCW">
    <property type="method" value="NMR"/>
    <property type="chains" value="A=1-22"/>
</dbReference>
<dbReference type="PDB" id="2MCX">
    <property type="method" value="NMR"/>
    <property type="chains" value="A=1-22"/>
</dbReference>
<dbReference type="PDB" id="6PEZ">
    <property type="method" value="NMR"/>
    <property type="chains" value="A=1-22"/>
</dbReference>
<dbReference type="PDBsum" id="2MCW"/>
<dbReference type="PDBsum" id="2MCX"/>
<dbReference type="PDBsum" id="6PEZ"/>
<dbReference type="BMRB" id="P0C006"/>
<dbReference type="SMR" id="P0C006"/>
<dbReference type="EvolutionaryTrace" id="P0C006"/>
<dbReference type="GO" id="GO:0005576">
    <property type="term" value="C:extracellular region"/>
    <property type="evidence" value="ECO:0007669"/>
    <property type="project" value="UniProtKB-SubCell"/>
</dbReference>
<dbReference type="GO" id="GO:0016020">
    <property type="term" value="C:membrane"/>
    <property type="evidence" value="ECO:0007669"/>
    <property type="project" value="UniProtKB-SubCell"/>
</dbReference>
<dbReference type="GO" id="GO:0008289">
    <property type="term" value="F:lipid binding"/>
    <property type="evidence" value="ECO:0007669"/>
    <property type="project" value="UniProtKB-KW"/>
</dbReference>
<dbReference type="GO" id="GO:0042742">
    <property type="term" value="P:defense response to bacterium"/>
    <property type="evidence" value="ECO:0007669"/>
    <property type="project" value="UniProtKB-KW"/>
</dbReference>
<dbReference type="GO" id="GO:0045087">
    <property type="term" value="P:innate immune response"/>
    <property type="evidence" value="ECO:0007669"/>
    <property type="project" value="UniProtKB-KW"/>
</dbReference>
<dbReference type="GO" id="GO:0031640">
    <property type="term" value="P:killing of cells of another organism"/>
    <property type="evidence" value="ECO:0007669"/>
    <property type="project" value="UniProtKB-KW"/>
</dbReference>
<dbReference type="GO" id="GO:0050688">
    <property type="term" value="P:regulation of defense response to virus"/>
    <property type="evidence" value="ECO:0007669"/>
    <property type="project" value="UniProtKB-KW"/>
</dbReference>
<dbReference type="InterPro" id="IPR012515">
    <property type="entry name" value="Antimicrobial12"/>
</dbReference>
<dbReference type="Pfam" id="PF08107">
    <property type="entry name" value="Antimicrobial12"/>
    <property type="match status" value="1"/>
</dbReference>
<reference key="1">
    <citation type="journal article" date="2001" name="Nature">
        <title>Peptide antibiotics in mast cells of fish.</title>
        <authorList>
            <person name="Silphaduang U."/>
            <person name="Noga E.J."/>
        </authorList>
    </citation>
    <scope>PROTEIN SEQUENCE</scope>
</reference>
<reference key="2">
    <citation type="journal article" date="2004" name="Virology">
        <title>Inactivation of viruses infecting ectothermic animals by amphibian and piscine antimicrobial peptides.</title>
        <authorList>
            <person name="Chinchar V.G."/>
            <person name="Bryan L."/>
            <person name="Silphadaung U."/>
            <person name="Noga E."/>
            <person name="Wade D."/>
            <person name="Rollins-Smith L."/>
        </authorList>
    </citation>
    <scope>FUNCTION AS ANTIVIRAL PEPTIDE</scope>
</reference>
<reference key="3">
    <citation type="journal article" date="2014" name="J. Am. Chem. Soc.">
        <title>High-Resolution structures and orientations of antimicrobial peptides piscidin 1 and piscidin 3 in fluid bilayers reveal tilting, kinking, and bilayer immersion.</title>
        <authorList>
            <person name="Perrin B.S. Jr."/>
            <person name="Tian Y."/>
            <person name="Fu R."/>
            <person name="Grant C.V."/>
            <person name="Chekmenev E.Y."/>
            <person name="Wieczorek W.E."/>
            <person name="Dao A.E."/>
            <person name="Hayden R.M."/>
            <person name="Burzynski C.M."/>
            <person name="Venable R.M."/>
            <person name="Sharma M."/>
            <person name="Opella S.J."/>
            <person name="Pastor R.W."/>
            <person name="Cotten M.L."/>
        </authorList>
    </citation>
    <scope>STRUCTURE BY NMR</scope>
    <scope>LIPID-BINDING</scope>
    <scope>SUBCELLULAR LOCATION</scope>
</reference>
<comment type="function">
    <text evidence="3">Antimicrobial peptide with broad-spectrum activity against Gram-positive and Gram-negative bacteria. Rapidly inactivates both channel catfish herpesvirus (ED(50)=11 uM) and frog virus 3 (ED(50)=16 uM) over a wide temperature range (PubMed:15193922). Has hemolytic activity.</text>
</comment>
<comment type="subcellular location">
    <subcellularLocation>
        <location evidence="4">Secreted</location>
    </subcellularLocation>
    <subcellularLocation>
        <location evidence="4">Membrane</location>
        <topology evidence="4">Peripheral membrane protein</topology>
    </subcellularLocation>
    <text>Associates with lipid bilayers via its amphipathic helix and can insert itself into the lipid bilayer.</text>
</comment>
<comment type="tissue specificity">
    <text>Mast cells in gill, skin and gut, and in lining blood vessels in the viscera.</text>
</comment>
<comment type="similarity">
    <text evidence="7">Belongs to the pleurocidin family.</text>
</comment>
<keyword id="KW-0002">3D-structure</keyword>
<keyword id="KW-0027">Amidation</keyword>
<keyword id="KW-0044">Antibiotic</keyword>
<keyword id="KW-0929">Antimicrobial</keyword>
<keyword id="KW-0930">Antiviral protein</keyword>
<keyword id="KW-0204">Cytolysis</keyword>
<keyword id="KW-0903">Direct protein sequencing</keyword>
<keyword id="KW-0354">Hemolysis</keyword>
<keyword id="KW-0391">Immunity</keyword>
<keyword id="KW-0399">Innate immunity</keyword>
<keyword id="KW-0446">Lipid-binding</keyword>
<keyword id="KW-0472">Membrane</keyword>
<keyword id="KW-0964">Secreted</keyword>
<protein>
    <recommendedName>
        <fullName evidence="5 6">Piscidin-3</fullName>
    </recommendedName>
</protein>
<name>PISC3_MORCS</name>
<feature type="peptide" id="PRO_0000043417" description="Piscidin-3" evidence="2">
    <location>
        <begin position="1"/>
        <end position="22"/>
    </location>
</feature>
<feature type="modified residue" description="Glycine amide" evidence="1">
    <location>
        <position position="22"/>
    </location>
</feature>
<feature type="helix" evidence="8">
    <location>
        <begin position="2"/>
        <end position="20"/>
    </location>
</feature>
<evidence type="ECO:0000250" key="1"/>
<evidence type="ECO:0000269" key="2">
    <source>
    </source>
</evidence>
<evidence type="ECO:0000269" key="3">
    <source>
    </source>
</evidence>
<evidence type="ECO:0000269" key="4">
    <source>
    </source>
</evidence>
<evidence type="ECO:0000303" key="5">
    <source>
    </source>
</evidence>
<evidence type="ECO:0000303" key="6">
    <source>
    </source>
</evidence>
<evidence type="ECO:0000305" key="7"/>
<evidence type="ECO:0007829" key="8">
    <source>
        <dbReference type="PDB" id="2MCW"/>
    </source>
</evidence>